<dbReference type="EMBL" id="U75930">
    <property type="protein sequence ID" value="AAC59047.1"/>
    <property type="molecule type" value="Genomic_DNA"/>
</dbReference>
<dbReference type="RefSeq" id="NP_046204.1">
    <property type="nucleotide sequence ID" value="NC_001875.2"/>
</dbReference>
<dbReference type="KEGG" id="vg:912032"/>
<dbReference type="OrthoDB" id="24008at10239"/>
<dbReference type="Proteomes" id="UP000009248">
    <property type="component" value="Genome"/>
</dbReference>
<name>Y043_NPVOP</name>
<feature type="chain" id="PRO_0000132980" description="Uncharacterized 7.1 kDa protein">
    <location>
        <begin position="1"/>
        <end position="63"/>
    </location>
</feature>
<gene>
    <name type="ORF">ORF48</name>
</gene>
<sequence>MNAQYATCYLCDELVYLFKKQFARTSASAAALYRKRMAIVRRGVVLCQRCSSALHGGDDPDRR</sequence>
<organismHost>
    <name type="scientific">Orgyia pseudotsugata</name>
    <name type="common">Douglas-fir tussock moth</name>
    <dbReference type="NCBI Taxonomy" id="33414"/>
</organismHost>
<reference key="1">
    <citation type="journal article" date="1997" name="Virology">
        <title>The sequence of the Orgyia pseudotsugata multinucleocapsid nuclear polyhedrosis virus genome.</title>
        <authorList>
            <person name="Ahrens C.H."/>
            <person name="Russell R.R."/>
            <person name="Funk C.J."/>
            <person name="Evans J."/>
            <person name="Harwood S."/>
            <person name="Rohrmann G.F."/>
        </authorList>
    </citation>
    <scope>NUCLEOTIDE SEQUENCE [LARGE SCALE GENOMIC DNA]</scope>
</reference>
<protein>
    <recommendedName>
        <fullName>Uncharacterized 7.1 kDa protein</fullName>
    </recommendedName>
</protein>
<accession>O10303</accession>
<proteinExistence type="predicted"/>
<organism>
    <name type="scientific">Orgyia pseudotsugata multicapsid polyhedrosis virus</name>
    <name type="common">OpMNPV</name>
    <dbReference type="NCBI Taxonomy" id="262177"/>
    <lineage>
        <taxon>Viruses</taxon>
        <taxon>Viruses incertae sedis</taxon>
        <taxon>Naldaviricetes</taxon>
        <taxon>Lefavirales</taxon>
        <taxon>Baculoviridae</taxon>
        <taxon>Alphabaculovirus</taxon>
        <taxon>Alphabaculovirus orpseudotsugatae</taxon>
    </lineage>
</organism>
<keyword id="KW-1185">Reference proteome</keyword>